<reference key="1">
    <citation type="journal article" date="2008" name="BMC Genomics">
        <title>The genome sequence of the fish pathogen Aliivibrio salmonicida strain LFI1238 shows extensive evidence of gene decay.</title>
        <authorList>
            <person name="Hjerde E."/>
            <person name="Lorentzen M.S."/>
            <person name="Holden M.T."/>
            <person name="Seeger K."/>
            <person name="Paulsen S."/>
            <person name="Bason N."/>
            <person name="Churcher C."/>
            <person name="Harris D."/>
            <person name="Norbertczak H."/>
            <person name="Quail M.A."/>
            <person name="Sanders S."/>
            <person name="Thurston S."/>
            <person name="Parkhill J."/>
            <person name="Willassen N.P."/>
            <person name="Thomson N.R."/>
        </authorList>
    </citation>
    <scope>NUCLEOTIDE SEQUENCE [LARGE SCALE GENOMIC DNA]</scope>
    <source>
        <strain>LFI1238</strain>
    </source>
</reference>
<protein>
    <recommendedName>
        <fullName evidence="1">3-dehydroquinate synthase</fullName>
        <shortName evidence="1">DHQS</shortName>
        <ecNumber evidence="1">4.2.3.4</ecNumber>
    </recommendedName>
</protein>
<accession>B6EM44</accession>
<comment type="function">
    <text evidence="1">Catalyzes the conversion of 3-deoxy-D-arabino-heptulosonate 7-phosphate (DAHP) to dehydroquinate (DHQ).</text>
</comment>
<comment type="catalytic activity">
    <reaction evidence="1">
        <text>7-phospho-2-dehydro-3-deoxy-D-arabino-heptonate = 3-dehydroquinate + phosphate</text>
        <dbReference type="Rhea" id="RHEA:21968"/>
        <dbReference type="ChEBI" id="CHEBI:32364"/>
        <dbReference type="ChEBI" id="CHEBI:43474"/>
        <dbReference type="ChEBI" id="CHEBI:58394"/>
        <dbReference type="EC" id="4.2.3.4"/>
    </reaction>
</comment>
<comment type="cofactor">
    <cofactor evidence="1">
        <name>Co(2+)</name>
        <dbReference type="ChEBI" id="CHEBI:48828"/>
    </cofactor>
    <cofactor evidence="1">
        <name>Zn(2+)</name>
        <dbReference type="ChEBI" id="CHEBI:29105"/>
    </cofactor>
    <text evidence="1">Binds 1 divalent metal cation per subunit. Can use either Co(2+) or Zn(2+).</text>
</comment>
<comment type="cofactor">
    <cofactor evidence="1">
        <name>NAD(+)</name>
        <dbReference type="ChEBI" id="CHEBI:57540"/>
    </cofactor>
</comment>
<comment type="pathway">
    <text evidence="1">Metabolic intermediate biosynthesis; chorismate biosynthesis; chorismate from D-erythrose 4-phosphate and phosphoenolpyruvate: step 2/7.</text>
</comment>
<comment type="subcellular location">
    <subcellularLocation>
        <location evidence="1">Cytoplasm</location>
    </subcellularLocation>
</comment>
<comment type="similarity">
    <text evidence="1">Belongs to the sugar phosphate cyclases superfamily. Dehydroquinate synthase family.</text>
</comment>
<keyword id="KW-0028">Amino-acid biosynthesis</keyword>
<keyword id="KW-0057">Aromatic amino acid biosynthesis</keyword>
<keyword id="KW-0170">Cobalt</keyword>
<keyword id="KW-0963">Cytoplasm</keyword>
<keyword id="KW-0456">Lyase</keyword>
<keyword id="KW-0479">Metal-binding</keyword>
<keyword id="KW-0520">NAD</keyword>
<keyword id="KW-0547">Nucleotide-binding</keyword>
<keyword id="KW-0862">Zinc</keyword>
<feature type="chain" id="PRO_1000094449" description="3-dehydroquinate synthase">
    <location>
        <begin position="1"/>
        <end position="362"/>
    </location>
</feature>
<feature type="binding site" evidence="1">
    <location>
        <begin position="72"/>
        <end position="77"/>
    </location>
    <ligand>
        <name>NAD(+)</name>
        <dbReference type="ChEBI" id="CHEBI:57540"/>
    </ligand>
</feature>
<feature type="binding site" evidence="1">
    <location>
        <begin position="106"/>
        <end position="110"/>
    </location>
    <ligand>
        <name>NAD(+)</name>
        <dbReference type="ChEBI" id="CHEBI:57540"/>
    </ligand>
</feature>
<feature type="binding site" evidence="1">
    <location>
        <begin position="130"/>
        <end position="131"/>
    </location>
    <ligand>
        <name>NAD(+)</name>
        <dbReference type="ChEBI" id="CHEBI:57540"/>
    </ligand>
</feature>
<feature type="binding site" evidence="1">
    <location>
        <position position="143"/>
    </location>
    <ligand>
        <name>NAD(+)</name>
        <dbReference type="ChEBI" id="CHEBI:57540"/>
    </ligand>
</feature>
<feature type="binding site" evidence="1">
    <location>
        <position position="152"/>
    </location>
    <ligand>
        <name>NAD(+)</name>
        <dbReference type="ChEBI" id="CHEBI:57540"/>
    </ligand>
</feature>
<feature type="binding site" evidence="1">
    <location>
        <begin position="170"/>
        <end position="173"/>
    </location>
    <ligand>
        <name>NAD(+)</name>
        <dbReference type="ChEBI" id="CHEBI:57540"/>
    </ligand>
</feature>
<feature type="binding site" evidence="1">
    <location>
        <position position="185"/>
    </location>
    <ligand>
        <name>Zn(2+)</name>
        <dbReference type="ChEBI" id="CHEBI:29105"/>
    </ligand>
</feature>
<feature type="binding site" evidence="1">
    <location>
        <position position="248"/>
    </location>
    <ligand>
        <name>Zn(2+)</name>
        <dbReference type="ChEBI" id="CHEBI:29105"/>
    </ligand>
</feature>
<feature type="binding site" evidence="1">
    <location>
        <position position="265"/>
    </location>
    <ligand>
        <name>Zn(2+)</name>
        <dbReference type="ChEBI" id="CHEBI:29105"/>
    </ligand>
</feature>
<dbReference type="EC" id="4.2.3.4" evidence="1"/>
<dbReference type="EMBL" id="FM178379">
    <property type="protein sequence ID" value="CAQ80407.1"/>
    <property type="molecule type" value="Genomic_DNA"/>
</dbReference>
<dbReference type="RefSeq" id="WP_012551170.1">
    <property type="nucleotide sequence ID" value="NC_011312.1"/>
</dbReference>
<dbReference type="SMR" id="B6EM44"/>
<dbReference type="KEGG" id="vsa:VSAL_I2723"/>
<dbReference type="eggNOG" id="COG0337">
    <property type="taxonomic scope" value="Bacteria"/>
</dbReference>
<dbReference type="HOGENOM" id="CLU_001201_0_2_6"/>
<dbReference type="UniPathway" id="UPA00053">
    <property type="reaction ID" value="UER00085"/>
</dbReference>
<dbReference type="Proteomes" id="UP000001730">
    <property type="component" value="Chromosome 1"/>
</dbReference>
<dbReference type="GO" id="GO:0005737">
    <property type="term" value="C:cytoplasm"/>
    <property type="evidence" value="ECO:0007669"/>
    <property type="project" value="UniProtKB-SubCell"/>
</dbReference>
<dbReference type="GO" id="GO:0003856">
    <property type="term" value="F:3-dehydroquinate synthase activity"/>
    <property type="evidence" value="ECO:0007669"/>
    <property type="project" value="UniProtKB-UniRule"/>
</dbReference>
<dbReference type="GO" id="GO:0046872">
    <property type="term" value="F:metal ion binding"/>
    <property type="evidence" value="ECO:0007669"/>
    <property type="project" value="UniProtKB-KW"/>
</dbReference>
<dbReference type="GO" id="GO:0000166">
    <property type="term" value="F:nucleotide binding"/>
    <property type="evidence" value="ECO:0007669"/>
    <property type="project" value="UniProtKB-KW"/>
</dbReference>
<dbReference type="GO" id="GO:0008652">
    <property type="term" value="P:amino acid biosynthetic process"/>
    <property type="evidence" value="ECO:0007669"/>
    <property type="project" value="UniProtKB-KW"/>
</dbReference>
<dbReference type="GO" id="GO:0009073">
    <property type="term" value="P:aromatic amino acid family biosynthetic process"/>
    <property type="evidence" value="ECO:0007669"/>
    <property type="project" value="UniProtKB-KW"/>
</dbReference>
<dbReference type="GO" id="GO:0009423">
    <property type="term" value="P:chorismate biosynthetic process"/>
    <property type="evidence" value="ECO:0007669"/>
    <property type="project" value="UniProtKB-UniRule"/>
</dbReference>
<dbReference type="CDD" id="cd08195">
    <property type="entry name" value="DHQS"/>
    <property type="match status" value="1"/>
</dbReference>
<dbReference type="FunFam" id="1.20.1090.10:FF:000002">
    <property type="entry name" value="3-dehydroquinate synthase"/>
    <property type="match status" value="1"/>
</dbReference>
<dbReference type="FunFam" id="3.40.50.1970:FF:000001">
    <property type="entry name" value="3-dehydroquinate synthase"/>
    <property type="match status" value="1"/>
</dbReference>
<dbReference type="Gene3D" id="3.40.50.1970">
    <property type="match status" value="1"/>
</dbReference>
<dbReference type="Gene3D" id="1.20.1090.10">
    <property type="entry name" value="Dehydroquinate synthase-like - alpha domain"/>
    <property type="match status" value="1"/>
</dbReference>
<dbReference type="HAMAP" id="MF_00110">
    <property type="entry name" value="DHQ_synthase"/>
    <property type="match status" value="1"/>
</dbReference>
<dbReference type="InterPro" id="IPR050071">
    <property type="entry name" value="Dehydroquinate_synthase"/>
</dbReference>
<dbReference type="InterPro" id="IPR016037">
    <property type="entry name" value="DHQ_synth_AroB"/>
</dbReference>
<dbReference type="InterPro" id="IPR030963">
    <property type="entry name" value="DHQ_synth_fam"/>
</dbReference>
<dbReference type="InterPro" id="IPR030960">
    <property type="entry name" value="DHQS/DOIS_N"/>
</dbReference>
<dbReference type="InterPro" id="IPR056179">
    <property type="entry name" value="DHQS_C"/>
</dbReference>
<dbReference type="NCBIfam" id="TIGR01357">
    <property type="entry name" value="aroB"/>
    <property type="match status" value="1"/>
</dbReference>
<dbReference type="PANTHER" id="PTHR43622">
    <property type="entry name" value="3-DEHYDROQUINATE SYNTHASE"/>
    <property type="match status" value="1"/>
</dbReference>
<dbReference type="PANTHER" id="PTHR43622:SF7">
    <property type="entry name" value="3-DEHYDROQUINATE SYNTHASE, CHLOROPLASTIC"/>
    <property type="match status" value="1"/>
</dbReference>
<dbReference type="Pfam" id="PF01761">
    <property type="entry name" value="DHQ_synthase"/>
    <property type="match status" value="1"/>
</dbReference>
<dbReference type="Pfam" id="PF24621">
    <property type="entry name" value="DHQS_C"/>
    <property type="match status" value="1"/>
</dbReference>
<dbReference type="PIRSF" id="PIRSF001455">
    <property type="entry name" value="DHQ_synth"/>
    <property type="match status" value="1"/>
</dbReference>
<dbReference type="SUPFAM" id="SSF56796">
    <property type="entry name" value="Dehydroquinate synthase-like"/>
    <property type="match status" value="1"/>
</dbReference>
<name>AROB_ALISL</name>
<gene>
    <name evidence="1" type="primary">aroB</name>
    <name type="ordered locus">VSAL_I2723</name>
</gene>
<evidence type="ECO:0000255" key="1">
    <source>
        <dbReference type="HAMAP-Rule" id="MF_00110"/>
    </source>
</evidence>
<organism>
    <name type="scientific">Aliivibrio salmonicida (strain LFI1238)</name>
    <name type="common">Vibrio salmonicida (strain LFI1238)</name>
    <dbReference type="NCBI Taxonomy" id="316275"/>
    <lineage>
        <taxon>Bacteria</taxon>
        <taxon>Pseudomonadati</taxon>
        <taxon>Pseudomonadota</taxon>
        <taxon>Gammaproteobacteria</taxon>
        <taxon>Vibrionales</taxon>
        <taxon>Vibrionaceae</taxon>
        <taxon>Aliivibrio</taxon>
    </lineage>
</organism>
<proteinExistence type="inferred from homology"/>
<sequence length="362" mass="39534">METIHVDLAERSYPISIGAELFCNPAHFSSVIPAKKRVVVISNVTVAPLYAQQIIDTLNTFECQVSLLELDDGEQYKNLDTFNQILTFLLEENHSRDVTIVALGGGVVGDVVGFASACYQRGVDFIQVPTTLLSQVDSSVGGKTAINHPLGKNMVGAFYQPKAVIIDINCLKTLPEREFAAGMAEVIKYGIIIDSDFFDWLDENMEKLYALDHDALVYAISRCCQIKADVVAKDEKESGVRALLNLGHTFGHAIEAEMGYGNWLHGEAVSAGTVMAAVTAQKEGLISQQEVDRICALLKKAKLPLKAPKEMTVEAFMKHMMRDKKVLSGKLRLVLPTSIGSSEVVTGVSERVLADVIEQCKA</sequence>